<sequence length="444" mass="47735">MPFIANTDDDRRSMLQAIGVGSFEELIPDIPSEFCLKEALSLFPSMSEMEVASLLDRLASANRTSPDYVSFIGGGAYDHYIPAALKTIVSRSEFYTAYTPYQAEVSQGTLQAIYEYQSMICRLYGMSVANASLYDGATAMAEAVSMAMNVTGRSTVLVAGKIHPNTSAVLKTFIEAGGKASVVQNVLTDGVCDIAALESRMSDQIAAVIVQQPNFYGCLEDVEAIGALARSHGALFIVSADPVSLGLLNAPGRYGADIAVGEGQPLGSALNFGGPYLGIFAVAEKYVRKIPGRLVGMTKDRDGEDGFILTLQTREQHIRREKATSNICTNQALNALQAVVYLSLMGKDGLCQVAEHCLQKAHYLADKIADLPGYSLRFAGPFFREFVVNTPVDASVVVNTMMEKGFFAGYDLGIHDDSGLLIAVTEKRSRAEMDSFVENLGAIS</sequence>
<name>GCSPA_PROA2</name>
<reference key="1">
    <citation type="submission" date="2008-06" db="EMBL/GenBank/DDBJ databases">
        <title>Complete sequence of chromosome of Prosthecochloris aestuarii DSM 271.</title>
        <authorList>
            <consortium name="US DOE Joint Genome Institute"/>
            <person name="Lucas S."/>
            <person name="Copeland A."/>
            <person name="Lapidus A."/>
            <person name="Glavina del Rio T."/>
            <person name="Dalin E."/>
            <person name="Tice H."/>
            <person name="Bruce D."/>
            <person name="Goodwin L."/>
            <person name="Pitluck S."/>
            <person name="Schmutz J."/>
            <person name="Larimer F."/>
            <person name="Land M."/>
            <person name="Hauser L."/>
            <person name="Kyrpides N."/>
            <person name="Anderson I."/>
            <person name="Liu Z."/>
            <person name="Li T."/>
            <person name="Zhao F."/>
            <person name="Overmann J."/>
            <person name="Bryant D.A."/>
            <person name="Richardson P."/>
        </authorList>
    </citation>
    <scope>NUCLEOTIDE SEQUENCE [LARGE SCALE GENOMIC DNA]</scope>
    <source>
        <strain>DSM 271 / SK 413</strain>
    </source>
</reference>
<comment type="function">
    <text evidence="1">The glycine cleavage system catalyzes the degradation of glycine. The P protein binds the alpha-amino group of glycine through its pyridoxal phosphate cofactor; CO(2) is released and the remaining methylamine moiety is then transferred to the lipoamide cofactor of the H protein.</text>
</comment>
<comment type="catalytic activity">
    <reaction evidence="1">
        <text>N(6)-[(R)-lipoyl]-L-lysyl-[glycine-cleavage complex H protein] + glycine + H(+) = N(6)-[(R)-S(8)-aminomethyldihydrolipoyl]-L-lysyl-[glycine-cleavage complex H protein] + CO2</text>
        <dbReference type="Rhea" id="RHEA:24304"/>
        <dbReference type="Rhea" id="RHEA-COMP:10494"/>
        <dbReference type="Rhea" id="RHEA-COMP:10495"/>
        <dbReference type="ChEBI" id="CHEBI:15378"/>
        <dbReference type="ChEBI" id="CHEBI:16526"/>
        <dbReference type="ChEBI" id="CHEBI:57305"/>
        <dbReference type="ChEBI" id="CHEBI:83099"/>
        <dbReference type="ChEBI" id="CHEBI:83143"/>
        <dbReference type="EC" id="1.4.4.2"/>
    </reaction>
</comment>
<comment type="subunit">
    <text evidence="1">The glycine cleavage system is composed of four proteins: P, T, L and H. In this organism, the P 'protein' is a heterodimer of two subunits.</text>
</comment>
<comment type="similarity">
    <text evidence="1">Belongs to the GcvP family. N-terminal subunit subfamily.</text>
</comment>
<proteinExistence type="inferred from homology"/>
<organism>
    <name type="scientific">Prosthecochloris aestuarii (strain DSM 271 / SK 413)</name>
    <dbReference type="NCBI Taxonomy" id="290512"/>
    <lineage>
        <taxon>Bacteria</taxon>
        <taxon>Pseudomonadati</taxon>
        <taxon>Chlorobiota</taxon>
        <taxon>Chlorobiia</taxon>
        <taxon>Chlorobiales</taxon>
        <taxon>Chlorobiaceae</taxon>
        <taxon>Prosthecochloris</taxon>
    </lineage>
</organism>
<accession>B4S5J4</accession>
<feature type="chain" id="PRO_1000132486" description="Probable glycine dehydrogenase (decarboxylating) subunit 1">
    <location>
        <begin position="1"/>
        <end position="444"/>
    </location>
</feature>
<dbReference type="EC" id="1.4.4.2" evidence="1"/>
<dbReference type="EMBL" id="CP001108">
    <property type="protein sequence ID" value="ACF45591.1"/>
    <property type="molecule type" value="Genomic_DNA"/>
</dbReference>
<dbReference type="RefSeq" id="WP_012505128.1">
    <property type="nucleotide sequence ID" value="NC_011059.1"/>
</dbReference>
<dbReference type="SMR" id="B4S5J4"/>
<dbReference type="STRING" id="290512.Paes_0535"/>
<dbReference type="KEGG" id="paa:Paes_0535"/>
<dbReference type="eggNOG" id="COG0403">
    <property type="taxonomic scope" value="Bacteria"/>
</dbReference>
<dbReference type="HOGENOM" id="CLU_004620_0_2_10"/>
<dbReference type="Proteomes" id="UP000002725">
    <property type="component" value="Chromosome"/>
</dbReference>
<dbReference type="GO" id="GO:0004375">
    <property type="term" value="F:glycine dehydrogenase (decarboxylating) activity"/>
    <property type="evidence" value="ECO:0007669"/>
    <property type="project" value="UniProtKB-EC"/>
</dbReference>
<dbReference type="GO" id="GO:0019464">
    <property type="term" value="P:glycine decarboxylation via glycine cleavage system"/>
    <property type="evidence" value="ECO:0007669"/>
    <property type="project" value="UniProtKB-UniRule"/>
</dbReference>
<dbReference type="GO" id="GO:0009116">
    <property type="term" value="P:nucleoside metabolic process"/>
    <property type="evidence" value="ECO:0007669"/>
    <property type="project" value="InterPro"/>
</dbReference>
<dbReference type="CDD" id="cd00613">
    <property type="entry name" value="GDC-P"/>
    <property type="match status" value="1"/>
</dbReference>
<dbReference type="Gene3D" id="3.90.1150.10">
    <property type="entry name" value="Aspartate Aminotransferase, domain 1"/>
    <property type="match status" value="1"/>
</dbReference>
<dbReference type="Gene3D" id="3.40.640.10">
    <property type="entry name" value="Type I PLP-dependent aspartate aminotransferase-like (Major domain)"/>
    <property type="match status" value="1"/>
</dbReference>
<dbReference type="HAMAP" id="MF_00712">
    <property type="entry name" value="GcvPA"/>
    <property type="match status" value="1"/>
</dbReference>
<dbReference type="InterPro" id="IPR023010">
    <property type="entry name" value="GcvPA"/>
</dbReference>
<dbReference type="InterPro" id="IPR049315">
    <property type="entry name" value="GDC-P_N"/>
</dbReference>
<dbReference type="InterPro" id="IPR020581">
    <property type="entry name" value="GDC_P"/>
</dbReference>
<dbReference type="InterPro" id="IPR015424">
    <property type="entry name" value="PyrdxlP-dep_Trfase"/>
</dbReference>
<dbReference type="InterPro" id="IPR015421">
    <property type="entry name" value="PyrdxlP-dep_Trfase_major"/>
</dbReference>
<dbReference type="InterPro" id="IPR015422">
    <property type="entry name" value="PyrdxlP-dep_Trfase_small"/>
</dbReference>
<dbReference type="NCBIfam" id="NF001696">
    <property type="entry name" value="PRK00451.1"/>
    <property type="match status" value="1"/>
</dbReference>
<dbReference type="PANTHER" id="PTHR42806">
    <property type="entry name" value="GLYCINE CLEAVAGE SYSTEM P-PROTEIN"/>
    <property type="match status" value="1"/>
</dbReference>
<dbReference type="PANTHER" id="PTHR42806:SF1">
    <property type="entry name" value="GLYCINE DEHYDROGENASE (DECARBOXYLATING)"/>
    <property type="match status" value="1"/>
</dbReference>
<dbReference type="Pfam" id="PF02347">
    <property type="entry name" value="GDC-P"/>
    <property type="match status" value="1"/>
</dbReference>
<dbReference type="PIRSF" id="PIRSF006815">
    <property type="entry name" value="GcvPA"/>
    <property type="match status" value="1"/>
</dbReference>
<dbReference type="SUPFAM" id="SSF53383">
    <property type="entry name" value="PLP-dependent transferases"/>
    <property type="match status" value="1"/>
</dbReference>
<keyword id="KW-0560">Oxidoreductase</keyword>
<gene>
    <name evidence="1" type="primary">gcvPA</name>
    <name type="ordered locus">Paes_0535</name>
</gene>
<evidence type="ECO:0000255" key="1">
    <source>
        <dbReference type="HAMAP-Rule" id="MF_00712"/>
    </source>
</evidence>
<protein>
    <recommendedName>
        <fullName evidence="1">Probable glycine dehydrogenase (decarboxylating) subunit 1</fullName>
        <ecNumber evidence="1">1.4.4.2</ecNumber>
    </recommendedName>
    <alternativeName>
        <fullName evidence="1">Glycine cleavage system P-protein subunit 1</fullName>
    </alternativeName>
    <alternativeName>
        <fullName evidence="1">Glycine decarboxylase subunit 1</fullName>
    </alternativeName>
    <alternativeName>
        <fullName evidence="1">Glycine dehydrogenase (aminomethyl-transferring) subunit 1</fullName>
    </alternativeName>
</protein>